<feature type="chain" id="PRO_1000125867" description="Ion-translocating oxidoreductase complex subunit E">
    <location>
        <begin position="1"/>
        <end position="231"/>
    </location>
</feature>
<feature type="transmembrane region" description="Helical" evidence="1">
    <location>
        <begin position="18"/>
        <end position="38"/>
    </location>
</feature>
<feature type="transmembrane region" description="Helical" evidence="1">
    <location>
        <begin position="39"/>
        <end position="59"/>
    </location>
</feature>
<feature type="transmembrane region" description="Helical" evidence="1">
    <location>
        <begin position="63"/>
        <end position="83"/>
    </location>
</feature>
<feature type="transmembrane region" description="Helical" evidence="1">
    <location>
        <begin position="86"/>
        <end position="106"/>
    </location>
</feature>
<feature type="transmembrane region" description="Helical" evidence="1">
    <location>
        <begin position="125"/>
        <end position="145"/>
    </location>
</feature>
<feature type="transmembrane region" description="Helical" evidence="1">
    <location>
        <begin position="182"/>
        <end position="202"/>
    </location>
</feature>
<proteinExistence type="inferred from homology"/>
<dbReference type="EC" id="7.-.-.-" evidence="1"/>
<dbReference type="EMBL" id="CP001063">
    <property type="protein sequence ID" value="ACD09288.1"/>
    <property type="molecule type" value="Genomic_DNA"/>
</dbReference>
<dbReference type="RefSeq" id="WP_001289657.1">
    <property type="nucleotide sequence ID" value="NC_010658.1"/>
</dbReference>
<dbReference type="SMR" id="B2U2D1"/>
<dbReference type="STRING" id="344609.SbBS512_E1821"/>
<dbReference type="GeneID" id="93775784"/>
<dbReference type="KEGG" id="sbc:SbBS512_E1821"/>
<dbReference type="HOGENOM" id="CLU_046659_1_0_6"/>
<dbReference type="Proteomes" id="UP000001030">
    <property type="component" value="Chromosome"/>
</dbReference>
<dbReference type="GO" id="GO:0005886">
    <property type="term" value="C:plasma membrane"/>
    <property type="evidence" value="ECO:0007669"/>
    <property type="project" value="UniProtKB-SubCell"/>
</dbReference>
<dbReference type="GO" id="GO:0022900">
    <property type="term" value="P:electron transport chain"/>
    <property type="evidence" value="ECO:0007669"/>
    <property type="project" value="UniProtKB-UniRule"/>
</dbReference>
<dbReference type="HAMAP" id="MF_00478">
    <property type="entry name" value="RsxE_RnfE"/>
    <property type="match status" value="1"/>
</dbReference>
<dbReference type="InterPro" id="IPR003667">
    <property type="entry name" value="NqrDE/RnfAE"/>
</dbReference>
<dbReference type="InterPro" id="IPR010968">
    <property type="entry name" value="RnfE"/>
</dbReference>
<dbReference type="NCBIfam" id="NF009070">
    <property type="entry name" value="PRK12405.1"/>
    <property type="match status" value="1"/>
</dbReference>
<dbReference type="NCBIfam" id="TIGR01948">
    <property type="entry name" value="rnfE"/>
    <property type="match status" value="1"/>
</dbReference>
<dbReference type="PANTHER" id="PTHR30586">
    <property type="entry name" value="ELECTRON TRANSPORT COMPLEX PROTEIN RNFE"/>
    <property type="match status" value="1"/>
</dbReference>
<dbReference type="PANTHER" id="PTHR30586:SF0">
    <property type="entry name" value="ION-TRANSLOCATING OXIDOREDUCTASE COMPLEX SUBUNIT E"/>
    <property type="match status" value="1"/>
</dbReference>
<dbReference type="Pfam" id="PF02508">
    <property type="entry name" value="Rnf-Nqr"/>
    <property type="match status" value="1"/>
</dbReference>
<dbReference type="PIRSF" id="PIRSF006102">
    <property type="entry name" value="NQR_DE"/>
    <property type="match status" value="1"/>
</dbReference>
<name>RSXE_SHIB3</name>
<organism>
    <name type="scientific">Shigella boydii serotype 18 (strain CDC 3083-94 / BS512)</name>
    <dbReference type="NCBI Taxonomy" id="344609"/>
    <lineage>
        <taxon>Bacteria</taxon>
        <taxon>Pseudomonadati</taxon>
        <taxon>Pseudomonadota</taxon>
        <taxon>Gammaproteobacteria</taxon>
        <taxon>Enterobacterales</taxon>
        <taxon>Enterobacteriaceae</taxon>
        <taxon>Shigella</taxon>
    </lineage>
</organism>
<accession>B2U2D1</accession>
<protein>
    <recommendedName>
        <fullName evidence="1">Ion-translocating oxidoreductase complex subunit E</fullName>
        <ecNumber evidence="1">7.-.-.-</ecNumber>
    </recommendedName>
    <alternativeName>
        <fullName evidence="1">Rsx electron transport complex subunit E</fullName>
    </alternativeName>
</protein>
<sequence>MSEIKDVIVQGLWKNNSALVQLLGLCPLLAVTSTATNALGLGLATTLVLTLTNLTISTLRHWTPAEIRIPIYVMIIASVVSAVQMLINAYAFGLYQSLGIFIPLIVTNCIVVGRAEAFAAKKGPALSALDGFSIGMGATCAMFVLGSLREIIGNGTLFDGADALLGSWAKVLRVEIFHTDSPFLLAMLPPGAFIGLGLMLAGKYLIDERMKKRRTEAAAERALPNGETGNV</sequence>
<reference key="1">
    <citation type="submission" date="2008-05" db="EMBL/GenBank/DDBJ databases">
        <title>Complete sequence of Shigella boydii serotype 18 strain BS512.</title>
        <authorList>
            <person name="Rasko D.A."/>
            <person name="Rosovitz M."/>
            <person name="Maurelli A.T."/>
            <person name="Myers G."/>
            <person name="Seshadri R."/>
            <person name="Cer R."/>
            <person name="Jiang L."/>
            <person name="Ravel J."/>
            <person name="Sebastian Y."/>
        </authorList>
    </citation>
    <scope>NUCLEOTIDE SEQUENCE [LARGE SCALE GENOMIC DNA]</scope>
    <source>
        <strain>CDC 3083-94 / BS512</strain>
    </source>
</reference>
<evidence type="ECO:0000255" key="1">
    <source>
        <dbReference type="HAMAP-Rule" id="MF_00478"/>
    </source>
</evidence>
<comment type="function">
    <text evidence="1">Part of a membrane-bound complex that couples electron transfer with translocation of ions across the membrane. Required to maintain the reduced state of SoxR.</text>
</comment>
<comment type="subunit">
    <text evidence="1">The complex is composed of six subunits: RsxA, RsxB, RsxC, RsxD, RsxE and RsxG.</text>
</comment>
<comment type="subcellular location">
    <subcellularLocation>
        <location evidence="1">Cell inner membrane</location>
        <topology evidence="1">Multi-pass membrane protein</topology>
    </subcellularLocation>
</comment>
<comment type="similarity">
    <text evidence="1">Belongs to the NqrDE/RnfAE family.</text>
</comment>
<keyword id="KW-0997">Cell inner membrane</keyword>
<keyword id="KW-1003">Cell membrane</keyword>
<keyword id="KW-0249">Electron transport</keyword>
<keyword id="KW-0472">Membrane</keyword>
<keyword id="KW-1185">Reference proteome</keyword>
<keyword id="KW-1278">Translocase</keyword>
<keyword id="KW-0812">Transmembrane</keyword>
<keyword id="KW-1133">Transmembrane helix</keyword>
<keyword id="KW-0813">Transport</keyword>
<gene>
    <name evidence="1" type="primary">rsxE</name>
    <name type="synonym">rnfE</name>
    <name type="ordered locus">SbBS512_E1821</name>
</gene>